<name>RL16_BURCJ</name>
<evidence type="ECO:0000255" key="1">
    <source>
        <dbReference type="HAMAP-Rule" id="MF_01342"/>
    </source>
</evidence>
<evidence type="ECO:0000256" key="2">
    <source>
        <dbReference type="SAM" id="MobiDB-lite"/>
    </source>
</evidence>
<evidence type="ECO:0000305" key="3"/>
<dbReference type="EMBL" id="AM747720">
    <property type="protein sequence ID" value="CAR50552.1"/>
    <property type="molecule type" value="Genomic_DNA"/>
</dbReference>
<dbReference type="RefSeq" id="WP_006482873.1">
    <property type="nucleotide sequence ID" value="NC_011000.1"/>
</dbReference>
<dbReference type="SMR" id="B4E5C7"/>
<dbReference type="GeneID" id="93193444"/>
<dbReference type="KEGG" id="bcj:BCAL0241"/>
<dbReference type="eggNOG" id="COG0197">
    <property type="taxonomic scope" value="Bacteria"/>
</dbReference>
<dbReference type="HOGENOM" id="CLU_078858_2_1_4"/>
<dbReference type="BioCyc" id="BCEN216591:G1G1V-284-MONOMER"/>
<dbReference type="Proteomes" id="UP000001035">
    <property type="component" value="Chromosome 1"/>
</dbReference>
<dbReference type="GO" id="GO:0022625">
    <property type="term" value="C:cytosolic large ribosomal subunit"/>
    <property type="evidence" value="ECO:0007669"/>
    <property type="project" value="TreeGrafter"/>
</dbReference>
<dbReference type="GO" id="GO:0019843">
    <property type="term" value="F:rRNA binding"/>
    <property type="evidence" value="ECO:0007669"/>
    <property type="project" value="UniProtKB-UniRule"/>
</dbReference>
<dbReference type="GO" id="GO:0003735">
    <property type="term" value="F:structural constituent of ribosome"/>
    <property type="evidence" value="ECO:0007669"/>
    <property type="project" value="InterPro"/>
</dbReference>
<dbReference type="GO" id="GO:0000049">
    <property type="term" value="F:tRNA binding"/>
    <property type="evidence" value="ECO:0007669"/>
    <property type="project" value="UniProtKB-KW"/>
</dbReference>
<dbReference type="GO" id="GO:0006412">
    <property type="term" value="P:translation"/>
    <property type="evidence" value="ECO:0007669"/>
    <property type="project" value="UniProtKB-UniRule"/>
</dbReference>
<dbReference type="CDD" id="cd01433">
    <property type="entry name" value="Ribosomal_L16_L10e"/>
    <property type="match status" value="1"/>
</dbReference>
<dbReference type="FunFam" id="3.90.1170.10:FF:000001">
    <property type="entry name" value="50S ribosomal protein L16"/>
    <property type="match status" value="1"/>
</dbReference>
<dbReference type="Gene3D" id="3.90.1170.10">
    <property type="entry name" value="Ribosomal protein L10e/L16"/>
    <property type="match status" value="1"/>
</dbReference>
<dbReference type="HAMAP" id="MF_01342">
    <property type="entry name" value="Ribosomal_uL16"/>
    <property type="match status" value="1"/>
</dbReference>
<dbReference type="InterPro" id="IPR047873">
    <property type="entry name" value="Ribosomal_uL16"/>
</dbReference>
<dbReference type="InterPro" id="IPR000114">
    <property type="entry name" value="Ribosomal_uL16_bact-type"/>
</dbReference>
<dbReference type="InterPro" id="IPR020798">
    <property type="entry name" value="Ribosomal_uL16_CS"/>
</dbReference>
<dbReference type="InterPro" id="IPR016180">
    <property type="entry name" value="Ribosomal_uL16_dom"/>
</dbReference>
<dbReference type="InterPro" id="IPR036920">
    <property type="entry name" value="Ribosomal_uL16_sf"/>
</dbReference>
<dbReference type="NCBIfam" id="TIGR01164">
    <property type="entry name" value="rplP_bact"/>
    <property type="match status" value="1"/>
</dbReference>
<dbReference type="PANTHER" id="PTHR12220">
    <property type="entry name" value="50S/60S RIBOSOMAL PROTEIN L16"/>
    <property type="match status" value="1"/>
</dbReference>
<dbReference type="PANTHER" id="PTHR12220:SF13">
    <property type="entry name" value="LARGE RIBOSOMAL SUBUNIT PROTEIN UL16M"/>
    <property type="match status" value="1"/>
</dbReference>
<dbReference type="Pfam" id="PF00252">
    <property type="entry name" value="Ribosomal_L16"/>
    <property type="match status" value="1"/>
</dbReference>
<dbReference type="PRINTS" id="PR00060">
    <property type="entry name" value="RIBOSOMALL16"/>
</dbReference>
<dbReference type="SUPFAM" id="SSF54686">
    <property type="entry name" value="Ribosomal protein L16p/L10e"/>
    <property type="match status" value="1"/>
</dbReference>
<dbReference type="PROSITE" id="PS00586">
    <property type="entry name" value="RIBOSOMAL_L16_1"/>
    <property type="match status" value="1"/>
</dbReference>
<proteinExistence type="inferred from homology"/>
<sequence length="138" mass="15596">MLQPKRRKYRKEQKGRNTGKATRGNAVSFGEFGLKAIGRGRLTARQIEAARRAMTRHIKRGGRIWIRIFPDKPISQKPAEVRMGNGKGNPEYYVAEIQPGKMLYEMDGVTEELAREAFRLAAAKLPLKTAFIVRQLGA</sequence>
<accession>B4E5C7</accession>
<keyword id="KW-0687">Ribonucleoprotein</keyword>
<keyword id="KW-0689">Ribosomal protein</keyword>
<keyword id="KW-0694">RNA-binding</keyword>
<keyword id="KW-0699">rRNA-binding</keyword>
<keyword id="KW-0820">tRNA-binding</keyword>
<reference key="1">
    <citation type="journal article" date="2009" name="J. Bacteriol.">
        <title>The genome of Burkholderia cenocepacia J2315, an epidemic pathogen of cystic fibrosis patients.</title>
        <authorList>
            <person name="Holden M.T."/>
            <person name="Seth-Smith H.M."/>
            <person name="Crossman L.C."/>
            <person name="Sebaihia M."/>
            <person name="Bentley S.D."/>
            <person name="Cerdeno-Tarraga A.M."/>
            <person name="Thomson N.R."/>
            <person name="Bason N."/>
            <person name="Quail M.A."/>
            <person name="Sharp S."/>
            <person name="Cherevach I."/>
            <person name="Churcher C."/>
            <person name="Goodhead I."/>
            <person name="Hauser H."/>
            <person name="Holroyd N."/>
            <person name="Mungall K."/>
            <person name="Scott P."/>
            <person name="Walker D."/>
            <person name="White B."/>
            <person name="Rose H."/>
            <person name="Iversen P."/>
            <person name="Mil-Homens D."/>
            <person name="Rocha E.P."/>
            <person name="Fialho A.M."/>
            <person name="Baldwin A."/>
            <person name="Dowson C."/>
            <person name="Barrell B.G."/>
            <person name="Govan J.R."/>
            <person name="Vandamme P."/>
            <person name="Hart C.A."/>
            <person name="Mahenthiralingam E."/>
            <person name="Parkhill J."/>
        </authorList>
    </citation>
    <scope>NUCLEOTIDE SEQUENCE [LARGE SCALE GENOMIC DNA]</scope>
    <source>
        <strain>ATCC BAA-245 / DSM 16553 / LMG 16656 / NCTC 13227 / J2315 / CF5610</strain>
    </source>
</reference>
<gene>
    <name evidence="1" type="primary">rplP</name>
    <name type="ordered locus">BceJ2315_02440</name>
    <name type="ORF">BCAL0241</name>
</gene>
<comment type="function">
    <text evidence="1">Binds 23S rRNA and is also seen to make contacts with the A and possibly P site tRNAs.</text>
</comment>
<comment type="subunit">
    <text evidence="1">Part of the 50S ribosomal subunit.</text>
</comment>
<comment type="similarity">
    <text evidence="1">Belongs to the universal ribosomal protein uL16 family.</text>
</comment>
<feature type="chain" id="PRO_1000142937" description="Large ribosomal subunit protein uL16">
    <location>
        <begin position="1"/>
        <end position="138"/>
    </location>
</feature>
<feature type="region of interest" description="Disordered" evidence="2">
    <location>
        <begin position="1"/>
        <end position="24"/>
    </location>
</feature>
<feature type="compositionally biased region" description="Basic residues" evidence="2">
    <location>
        <begin position="1"/>
        <end position="13"/>
    </location>
</feature>
<protein>
    <recommendedName>
        <fullName evidence="1">Large ribosomal subunit protein uL16</fullName>
    </recommendedName>
    <alternativeName>
        <fullName evidence="3">50S ribosomal protein L16</fullName>
    </alternativeName>
</protein>
<organism>
    <name type="scientific">Burkholderia cenocepacia (strain ATCC BAA-245 / DSM 16553 / LMG 16656 / NCTC 13227 / J2315 / CF5610)</name>
    <name type="common">Burkholderia cepacia (strain J2315)</name>
    <dbReference type="NCBI Taxonomy" id="216591"/>
    <lineage>
        <taxon>Bacteria</taxon>
        <taxon>Pseudomonadati</taxon>
        <taxon>Pseudomonadota</taxon>
        <taxon>Betaproteobacteria</taxon>
        <taxon>Burkholderiales</taxon>
        <taxon>Burkholderiaceae</taxon>
        <taxon>Burkholderia</taxon>
        <taxon>Burkholderia cepacia complex</taxon>
    </lineage>
</organism>